<proteinExistence type="inferred from homology"/>
<name>ILVC2_BACCZ</name>
<dbReference type="EC" id="1.1.1.86" evidence="1"/>
<dbReference type="EMBL" id="CP000001">
    <property type="protein sequence ID" value="AAU18586.1"/>
    <property type="molecule type" value="Genomic_DNA"/>
</dbReference>
<dbReference type="RefSeq" id="WP_000861124.1">
    <property type="nucleotide sequence ID" value="NC_006274.1"/>
</dbReference>
<dbReference type="SMR" id="Q63CV4"/>
<dbReference type="KEGG" id="bcz:BCE33L1668"/>
<dbReference type="PATRIC" id="fig|288681.22.peg.3874"/>
<dbReference type="UniPathway" id="UPA00047">
    <property type="reaction ID" value="UER00056"/>
</dbReference>
<dbReference type="UniPathway" id="UPA00049">
    <property type="reaction ID" value="UER00060"/>
</dbReference>
<dbReference type="Proteomes" id="UP000002612">
    <property type="component" value="Chromosome"/>
</dbReference>
<dbReference type="GO" id="GO:0005829">
    <property type="term" value="C:cytosol"/>
    <property type="evidence" value="ECO:0007669"/>
    <property type="project" value="TreeGrafter"/>
</dbReference>
<dbReference type="GO" id="GO:0004455">
    <property type="term" value="F:ketol-acid reductoisomerase activity"/>
    <property type="evidence" value="ECO:0007669"/>
    <property type="project" value="UniProtKB-UniRule"/>
</dbReference>
<dbReference type="GO" id="GO:0000287">
    <property type="term" value="F:magnesium ion binding"/>
    <property type="evidence" value="ECO:0007669"/>
    <property type="project" value="UniProtKB-UniRule"/>
</dbReference>
<dbReference type="GO" id="GO:0050661">
    <property type="term" value="F:NADP binding"/>
    <property type="evidence" value="ECO:0007669"/>
    <property type="project" value="InterPro"/>
</dbReference>
<dbReference type="GO" id="GO:0009097">
    <property type="term" value="P:isoleucine biosynthetic process"/>
    <property type="evidence" value="ECO:0007669"/>
    <property type="project" value="UniProtKB-UniRule"/>
</dbReference>
<dbReference type="GO" id="GO:0009099">
    <property type="term" value="P:L-valine biosynthetic process"/>
    <property type="evidence" value="ECO:0007669"/>
    <property type="project" value="UniProtKB-UniRule"/>
</dbReference>
<dbReference type="FunFam" id="3.40.50.720:FF:000023">
    <property type="entry name" value="Ketol-acid reductoisomerase (NADP(+))"/>
    <property type="match status" value="1"/>
</dbReference>
<dbReference type="Gene3D" id="6.10.240.10">
    <property type="match status" value="1"/>
</dbReference>
<dbReference type="Gene3D" id="3.40.50.720">
    <property type="entry name" value="NAD(P)-binding Rossmann-like Domain"/>
    <property type="match status" value="1"/>
</dbReference>
<dbReference type="HAMAP" id="MF_00435">
    <property type="entry name" value="IlvC"/>
    <property type="match status" value="1"/>
</dbReference>
<dbReference type="InterPro" id="IPR008927">
    <property type="entry name" value="6-PGluconate_DH-like_C_sf"/>
</dbReference>
<dbReference type="InterPro" id="IPR013023">
    <property type="entry name" value="KARI"/>
</dbReference>
<dbReference type="InterPro" id="IPR000506">
    <property type="entry name" value="KARI_C"/>
</dbReference>
<dbReference type="InterPro" id="IPR013116">
    <property type="entry name" value="KARI_N"/>
</dbReference>
<dbReference type="InterPro" id="IPR014359">
    <property type="entry name" value="KARI_prok"/>
</dbReference>
<dbReference type="InterPro" id="IPR036291">
    <property type="entry name" value="NAD(P)-bd_dom_sf"/>
</dbReference>
<dbReference type="NCBIfam" id="TIGR00465">
    <property type="entry name" value="ilvC"/>
    <property type="match status" value="1"/>
</dbReference>
<dbReference type="NCBIfam" id="NF004017">
    <property type="entry name" value="PRK05479.1"/>
    <property type="match status" value="1"/>
</dbReference>
<dbReference type="NCBIfam" id="NF009940">
    <property type="entry name" value="PRK13403.1"/>
    <property type="match status" value="1"/>
</dbReference>
<dbReference type="PANTHER" id="PTHR21371">
    <property type="entry name" value="KETOL-ACID REDUCTOISOMERASE, MITOCHONDRIAL"/>
    <property type="match status" value="1"/>
</dbReference>
<dbReference type="PANTHER" id="PTHR21371:SF1">
    <property type="entry name" value="KETOL-ACID REDUCTOISOMERASE, MITOCHONDRIAL"/>
    <property type="match status" value="1"/>
</dbReference>
<dbReference type="Pfam" id="PF01450">
    <property type="entry name" value="KARI_C"/>
    <property type="match status" value="1"/>
</dbReference>
<dbReference type="Pfam" id="PF07991">
    <property type="entry name" value="KARI_N"/>
    <property type="match status" value="1"/>
</dbReference>
<dbReference type="PIRSF" id="PIRSF000116">
    <property type="entry name" value="IlvC_gammaproteo"/>
    <property type="match status" value="1"/>
</dbReference>
<dbReference type="SUPFAM" id="SSF48179">
    <property type="entry name" value="6-phosphogluconate dehydrogenase C-terminal domain-like"/>
    <property type="match status" value="1"/>
</dbReference>
<dbReference type="SUPFAM" id="SSF51735">
    <property type="entry name" value="NAD(P)-binding Rossmann-fold domains"/>
    <property type="match status" value="1"/>
</dbReference>
<dbReference type="PROSITE" id="PS51851">
    <property type="entry name" value="KARI_C"/>
    <property type="match status" value="1"/>
</dbReference>
<dbReference type="PROSITE" id="PS51850">
    <property type="entry name" value="KARI_N"/>
    <property type="match status" value="1"/>
</dbReference>
<feature type="chain" id="PRO_0000226156" description="Ketol-acid reductoisomerase (NADP(+)) 2">
    <location>
        <begin position="1"/>
        <end position="335"/>
    </location>
</feature>
<feature type="domain" description="KARI N-terminal Rossmann" evidence="2">
    <location>
        <begin position="1"/>
        <end position="180"/>
    </location>
</feature>
<feature type="domain" description="KARI C-terminal knotted" evidence="3">
    <location>
        <begin position="181"/>
        <end position="326"/>
    </location>
</feature>
<feature type="active site" evidence="1">
    <location>
        <position position="106"/>
    </location>
</feature>
<feature type="binding site" evidence="1">
    <location>
        <begin position="24"/>
        <end position="27"/>
    </location>
    <ligand>
        <name>NADP(+)</name>
        <dbReference type="ChEBI" id="CHEBI:58349"/>
    </ligand>
</feature>
<feature type="binding site" evidence="1">
    <location>
        <position position="47"/>
    </location>
    <ligand>
        <name>NADP(+)</name>
        <dbReference type="ChEBI" id="CHEBI:58349"/>
    </ligand>
</feature>
<feature type="binding site" evidence="1">
    <location>
        <position position="51"/>
    </location>
    <ligand>
        <name>NADP(+)</name>
        <dbReference type="ChEBI" id="CHEBI:58349"/>
    </ligand>
</feature>
<feature type="binding site" evidence="1">
    <location>
        <begin position="81"/>
        <end position="84"/>
    </location>
    <ligand>
        <name>NADP(+)</name>
        <dbReference type="ChEBI" id="CHEBI:58349"/>
    </ligand>
</feature>
<feature type="binding site" evidence="1">
    <location>
        <position position="132"/>
    </location>
    <ligand>
        <name>NADP(+)</name>
        <dbReference type="ChEBI" id="CHEBI:58349"/>
    </ligand>
</feature>
<feature type="binding site" evidence="1">
    <location>
        <position position="189"/>
    </location>
    <ligand>
        <name>Mg(2+)</name>
        <dbReference type="ChEBI" id="CHEBI:18420"/>
        <label>1</label>
    </ligand>
</feature>
<feature type="binding site" evidence="1">
    <location>
        <position position="189"/>
    </location>
    <ligand>
        <name>Mg(2+)</name>
        <dbReference type="ChEBI" id="CHEBI:18420"/>
        <label>2</label>
    </ligand>
</feature>
<feature type="binding site" evidence="1">
    <location>
        <position position="193"/>
    </location>
    <ligand>
        <name>Mg(2+)</name>
        <dbReference type="ChEBI" id="CHEBI:18420"/>
        <label>1</label>
    </ligand>
</feature>
<feature type="binding site" evidence="1">
    <location>
        <position position="225"/>
    </location>
    <ligand>
        <name>Mg(2+)</name>
        <dbReference type="ChEBI" id="CHEBI:18420"/>
        <label>2</label>
    </ligand>
</feature>
<feature type="binding site" evidence="1">
    <location>
        <position position="229"/>
    </location>
    <ligand>
        <name>Mg(2+)</name>
        <dbReference type="ChEBI" id="CHEBI:18420"/>
        <label>2</label>
    </ligand>
</feature>
<feature type="binding site" evidence="1">
    <location>
        <position position="250"/>
    </location>
    <ligand>
        <name>substrate</name>
    </ligand>
</feature>
<protein>
    <recommendedName>
        <fullName evidence="1">Ketol-acid reductoisomerase (NADP(+)) 2</fullName>
        <shortName evidence="1">KARI 2</shortName>
        <ecNumber evidence="1">1.1.1.86</ecNumber>
    </recommendedName>
    <alternativeName>
        <fullName evidence="1">Acetohydroxy-acid isomeroreductase 2</fullName>
        <shortName evidence="1">AHIR 2</shortName>
    </alternativeName>
    <alternativeName>
        <fullName evidence="1">Alpha-keto-beta-hydroxylacyl reductoisomerase 2</fullName>
    </alternativeName>
    <alternativeName>
        <fullName evidence="1">Ketol-acid reductoisomerase type 1</fullName>
    </alternativeName>
    <alternativeName>
        <fullName evidence="1">Ketol-acid reductoisomerase type I</fullName>
    </alternativeName>
</protein>
<evidence type="ECO:0000255" key="1">
    <source>
        <dbReference type="HAMAP-Rule" id="MF_00435"/>
    </source>
</evidence>
<evidence type="ECO:0000255" key="2">
    <source>
        <dbReference type="PROSITE-ProRule" id="PRU01197"/>
    </source>
</evidence>
<evidence type="ECO:0000255" key="3">
    <source>
        <dbReference type="PROSITE-ProRule" id="PRU01198"/>
    </source>
</evidence>
<sequence>MKTYYEKDANVDLLQGKTVAVVGYGSQGHAQAQNLRDSGVEVVVGVRPGKSYEVAKADGFEVMSVSEAVRTAQVVQMLLPDEQQAHVYKAEIEENLREGQMLLFSHGFNIHFGQINPPSYVDVAMVAPKSPGHLVRRVFQEGNGVPALVAVHQDATGTALHVALAYAKGVGCTRAGVIETTFQEETETDLFGEQAVLCGGVTALVKAGFETLTEGGYRPEIAYFECLHELKLIVDLMYEGGLTNMRHSISDTAEFGDYVTGSRIVTDGTKKEMKRVLTEIQQGEFAKKWILENQAGRPTHNAMKKAEQNHGLEKVGAELREMMSWIHAPKELVKK</sequence>
<organism>
    <name type="scientific">Bacillus cereus (strain ZK / E33L)</name>
    <dbReference type="NCBI Taxonomy" id="288681"/>
    <lineage>
        <taxon>Bacteria</taxon>
        <taxon>Bacillati</taxon>
        <taxon>Bacillota</taxon>
        <taxon>Bacilli</taxon>
        <taxon>Bacillales</taxon>
        <taxon>Bacillaceae</taxon>
        <taxon>Bacillus</taxon>
        <taxon>Bacillus cereus group</taxon>
    </lineage>
</organism>
<accession>Q63CV4</accession>
<reference key="1">
    <citation type="journal article" date="2006" name="J. Bacteriol.">
        <title>Pathogenomic sequence analysis of Bacillus cereus and Bacillus thuringiensis isolates closely related to Bacillus anthracis.</title>
        <authorList>
            <person name="Han C.S."/>
            <person name="Xie G."/>
            <person name="Challacombe J.F."/>
            <person name="Altherr M.R."/>
            <person name="Bhotika S.S."/>
            <person name="Bruce D."/>
            <person name="Campbell C.S."/>
            <person name="Campbell M.L."/>
            <person name="Chen J."/>
            <person name="Chertkov O."/>
            <person name="Cleland C."/>
            <person name="Dimitrijevic M."/>
            <person name="Doggett N.A."/>
            <person name="Fawcett J.J."/>
            <person name="Glavina T."/>
            <person name="Goodwin L.A."/>
            <person name="Hill K.K."/>
            <person name="Hitchcock P."/>
            <person name="Jackson P.J."/>
            <person name="Keim P."/>
            <person name="Kewalramani A.R."/>
            <person name="Longmire J."/>
            <person name="Lucas S."/>
            <person name="Malfatti S."/>
            <person name="McMurry K."/>
            <person name="Meincke L.J."/>
            <person name="Misra M."/>
            <person name="Moseman B.L."/>
            <person name="Mundt M."/>
            <person name="Munk A.C."/>
            <person name="Okinaka R.T."/>
            <person name="Parson-Quintana B."/>
            <person name="Reilly L.P."/>
            <person name="Richardson P."/>
            <person name="Robinson D.L."/>
            <person name="Rubin E."/>
            <person name="Saunders E."/>
            <person name="Tapia R."/>
            <person name="Tesmer J.G."/>
            <person name="Thayer N."/>
            <person name="Thompson L.S."/>
            <person name="Tice H."/>
            <person name="Ticknor L.O."/>
            <person name="Wills P.L."/>
            <person name="Brettin T.S."/>
            <person name="Gilna P."/>
        </authorList>
    </citation>
    <scope>NUCLEOTIDE SEQUENCE [LARGE SCALE GENOMIC DNA]</scope>
    <source>
        <strain>ZK / E33L</strain>
    </source>
</reference>
<keyword id="KW-0028">Amino-acid biosynthesis</keyword>
<keyword id="KW-0100">Branched-chain amino acid biosynthesis</keyword>
<keyword id="KW-0460">Magnesium</keyword>
<keyword id="KW-0479">Metal-binding</keyword>
<keyword id="KW-0521">NADP</keyword>
<keyword id="KW-0560">Oxidoreductase</keyword>
<comment type="function">
    <text evidence="1">Involved in the biosynthesis of branched-chain amino acids (BCAA). Catalyzes an alkyl-migration followed by a ketol-acid reduction of (S)-2-acetolactate (S2AL) to yield (R)-2,3-dihydroxy-isovalerate. In the isomerase reaction, S2AL is rearranged via a Mg-dependent methyl migration to produce 3-hydroxy-3-methyl-2-ketobutyrate (HMKB). In the reductase reaction, this 2-ketoacid undergoes a metal-dependent reduction by NADPH to yield (R)-2,3-dihydroxy-isovalerate.</text>
</comment>
<comment type="catalytic activity">
    <reaction evidence="1">
        <text>(2R)-2,3-dihydroxy-3-methylbutanoate + NADP(+) = (2S)-2-acetolactate + NADPH + H(+)</text>
        <dbReference type="Rhea" id="RHEA:22068"/>
        <dbReference type="ChEBI" id="CHEBI:15378"/>
        <dbReference type="ChEBI" id="CHEBI:49072"/>
        <dbReference type="ChEBI" id="CHEBI:57783"/>
        <dbReference type="ChEBI" id="CHEBI:58349"/>
        <dbReference type="ChEBI" id="CHEBI:58476"/>
        <dbReference type="EC" id="1.1.1.86"/>
    </reaction>
</comment>
<comment type="catalytic activity">
    <reaction evidence="1">
        <text>(2R,3R)-2,3-dihydroxy-3-methylpentanoate + NADP(+) = (S)-2-ethyl-2-hydroxy-3-oxobutanoate + NADPH + H(+)</text>
        <dbReference type="Rhea" id="RHEA:13493"/>
        <dbReference type="ChEBI" id="CHEBI:15378"/>
        <dbReference type="ChEBI" id="CHEBI:49256"/>
        <dbReference type="ChEBI" id="CHEBI:49258"/>
        <dbReference type="ChEBI" id="CHEBI:57783"/>
        <dbReference type="ChEBI" id="CHEBI:58349"/>
        <dbReference type="EC" id="1.1.1.86"/>
    </reaction>
</comment>
<comment type="cofactor">
    <cofactor evidence="1">
        <name>Mg(2+)</name>
        <dbReference type="ChEBI" id="CHEBI:18420"/>
    </cofactor>
    <text evidence="1">Binds 2 magnesium ions per subunit.</text>
</comment>
<comment type="pathway">
    <text evidence="1">Amino-acid biosynthesis; L-isoleucine biosynthesis; L-isoleucine from 2-oxobutanoate: step 2/4.</text>
</comment>
<comment type="pathway">
    <text evidence="1">Amino-acid biosynthesis; L-valine biosynthesis; L-valine from pyruvate: step 2/4.</text>
</comment>
<comment type="similarity">
    <text evidence="1">Belongs to the ketol-acid reductoisomerase family.</text>
</comment>
<gene>
    <name evidence="1" type="primary">ilvC2</name>
    <name type="ordered locus">BCE33L1668</name>
</gene>